<accession>P17655</accession>
<accession>A6NDG7</accession>
<accession>B7ZA96</accession>
<accession>E7ES58</accession>
<accession>Q16738</accession>
<accession>Q6PJT3</accession>
<accession>Q8WU26</accession>
<accession>Q9HBB1</accession>
<reference key="1">
    <citation type="journal article" date="1988" name="Biochemistry">
        <title>Molecular cloning of the cDNA for the large subunit of the high-Ca2+-requiring form of human Ca2+-activated neutral protease.</title>
        <authorList>
            <person name="Imajoh S."/>
            <person name="Aoki K."/>
            <person name="Ohno S."/>
            <person name="Emori Y."/>
            <person name="Kawasaki H."/>
            <person name="Sugihara H."/>
            <person name="Suzuki K."/>
        </authorList>
    </citation>
    <scope>NUCLEOTIDE SEQUENCE [MRNA] (ISOFORM 1)</scope>
    <scope>VARIANT GLU-22</scope>
</reference>
<reference key="2">
    <citation type="journal article" date="2000" name="Biochem. Biophys. Res. Commun.">
        <title>cDNA cloning by amplification of circularized first strand cDNAs reveals non-IRE-regulated iron-responsive mRNAs.</title>
        <authorList>
            <person name="Ye Z."/>
            <person name="Connor J.R."/>
        </authorList>
    </citation>
    <scope>NUCLEOTIDE SEQUENCE [MRNA] (ISOFORM 1)</scope>
    <scope>VARIANT GLU-22</scope>
    <source>
        <tissue>Astrocytoma</tissue>
    </source>
</reference>
<reference key="3">
    <citation type="journal article" date="2004" name="Nat. Genet.">
        <title>Complete sequencing and characterization of 21,243 full-length human cDNAs.</title>
        <authorList>
            <person name="Ota T."/>
            <person name="Suzuki Y."/>
            <person name="Nishikawa T."/>
            <person name="Otsuki T."/>
            <person name="Sugiyama T."/>
            <person name="Irie R."/>
            <person name="Wakamatsu A."/>
            <person name="Hayashi K."/>
            <person name="Sato H."/>
            <person name="Nagai K."/>
            <person name="Kimura K."/>
            <person name="Makita H."/>
            <person name="Sekine M."/>
            <person name="Obayashi M."/>
            <person name="Nishi T."/>
            <person name="Shibahara T."/>
            <person name="Tanaka T."/>
            <person name="Ishii S."/>
            <person name="Yamamoto J."/>
            <person name="Saito K."/>
            <person name="Kawai Y."/>
            <person name="Isono Y."/>
            <person name="Nakamura Y."/>
            <person name="Nagahari K."/>
            <person name="Murakami K."/>
            <person name="Yasuda T."/>
            <person name="Iwayanagi T."/>
            <person name="Wagatsuma M."/>
            <person name="Shiratori A."/>
            <person name="Sudo H."/>
            <person name="Hosoiri T."/>
            <person name="Kaku Y."/>
            <person name="Kodaira H."/>
            <person name="Kondo H."/>
            <person name="Sugawara M."/>
            <person name="Takahashi M."/>
            <person name="Kanda K."/>
            <person name="Yokoi T."/>
            <person name="Furuya T."/>
            <person name="Kikkawa E."/>
            <person name="Omura Y."/>
            <person name="Abe K."/>
            <person name="Kamihara K."/>
            <person name="Katsuta N."/>
            <person name="Sato K."/>
            <person name="Tanikawa M."/>
            <person name="Yamazaki M."/>
            <person name="Ninomiya K."/>
            <person name="Ishibashi T."/>
            <person name="Yamashita H."/>
            <person name="Murakawa K."/>
            <person name="Fujimori K."/>
            <person name="Tanai H."/>
            <person name="Kimata M."/>
            <person name="Watanabe M."/>
            <person name="Hiraoka S."/>
            <person name="Chiba Y."/>
            <person name="Ishida S."/>
            <person name="Ono Y."/>
            <person name="Takiguchi S."/>
            <person name="Watanabe S."/>
            <person name="Yosida M."/>
            <person name="Hotuta T."/>
            <person name="Kusano J."/>
            <person name="Kanehori K."/>
            <person name="Takahashi-Fujii A."/>
            <person name="Hara H."/>
            <person name="Tanase T.-O."/>
            <person name="Nomura Y."/>
            <person name="Togiya S."/>
            <person name="Komai F."/>
            <person name="Hara R."/>
            <person name="Takeuchi K."/>
            <person name="Arita M."/>
            <person name="Imose N."/>
            <person name="Musashino K."/>
            <person name="Yuuki H."/>
            <person name="Oshima A."/>
            <person name="Sasaki N."/>
            <person name="Aotsuka S."/>
            <person name="Yoshikawa Y."/>
            <person name="Matsunawa H."/>
            <person name="Ichihara T."/>
            <person name="Shiohata N."/>
            <person name="Sano S."/>
            <person name="Moriya S."/>
            <person name="Momiyama H."/>
            <person name="Satoh N."/>
            <person name="Takami S."/>
            <person name="Terashima Y."/>
            <person name="Suzuki O."/>
            <person name="Nakagawa S."/>
            <person name="Senoh A."/>
            <person name="Mizoguchi H."/>
            <person name="Goto Y."/>
            <person name="Shimizu F."/>
            <person name="Wakebe H."/>
            <person name="Hishigaki H."/>
            <person name="Watanabe T."/>
            <person name="Sugiyama A."/>
            <person name="Takemoto M."/>
            <person name="Kawakami B."/>
            <person name="Yamazaki M."/>
            <person name="Watanabe K."/>
            <person name="Kumagai A."/>
            <person name="Itakura S."/>
            <person name="Fukuzumi Y."/>
            <person name="Fujimori Y."/>
            <person name="Komiyama M."/>
            <person name="Tashiro H."/>
            <person name="Tanigami A."/>
            <person name="Fujiwara T."/>
            <person name="Ono T."/>
            <person name="Yamada K."/>
            <person name="Fujii Y."/>
            <person name="Ozaki K."/>
            <person name="Hirao M."/>
            <person name="Ohmori Y."/>
            <person name="Kawabata A."/>
            <person name="Hikiji T."/>
            <person name="Kobatake N."/>
            <person name="Inagaki H."/>
            <person name="Ikema Y."/>
            <person name="Okamoto S."/>
            <person name="Okitani R."/>
            <person name="Kawakami T."/>
            <person name="Noguchi S."/>
            <person name="Itoh T."/>
            <person name="Shigeta K."/>
            <person name="Senba T."/>
            <person name="Matsumura K."/>
            <person name="Nakajima Y."/>
            <person name="Mizuno T."/>
            <person name="Morinaga M."/>
            <person name="Sasaki M."/>
            <person name="Togashi T."/>
            <person name="Oyama M."/>
            <person name="Hata H."/>
            <person name="Watanabe M."/>
            <person name="Komatsu T."/>
            <person name="Mizushima-Sugano J."/>
            <person name="Satoh T."/>
            <person name="Shirai Y."/>
            <person name="Takahashi Y."/>
            <person name="Nakagawa K."/>
            <person name="Okumura K."/>
            <person name="Nagase T."/>
            <person name="Nomura N."/>
            <person name="Kikuchi H."/>
            <person name="Masuho Y."/>
            <person name="Yamashita R."/>
            <person name="Nakai K."/>
            <person name="Yada T."/>
            <person name="Nakamura Y."/>
            <person name="Ohara O."/>
            <person name="Isogai T."/>
            <person name="Sugano S."/>
        </authorList>
    </citation>
    <scope>NUCLEOTIDE SEQUENCE [LARGE SCALE MRNA] (ISOFORM 2)</scope>
</reference>
<reference key="4">
    <citation type="submission" date="2004-11" db="EMBL/GenBank/DDBJ databases">
        <authorList>
            <consortium name="NIEHS SNPs program"/>
        </authorList>
    </citation>
    <scope>NUCLEOTIDE SEQUENCE [GENOMIC DNA]</scope>
    <scope>VARIANTS GLU-22; GLY-68; ARG-476; GLN-521; GLN-568 AND GLN-677</scope>
</reference>
<reference key="5">
    <citation type="journal article" date="2006" name="Nature">
        <title>The DNA sequence and biological annotation of human chromosome 1.</title>
        <authorList>
            <person name="Gregory S.G."/>
            <person name="Barlow K.F."/>
            <person name="McLay K.E."/>
            <person name="Kaul R."/>
            <person name="Swarbreck D."/>
            <person name="Dunham A."/>
            <person name="Scott C.E."/>
            <person name="Howe K.L."/>
            <person name="Woodfine K."/>
            <person name="Spencer C.C.A."/>
            <person name="Jones M.C."/>
            <person name="Gillson C."/>
            <person name="Searle S."/>
            <person name="Zhou Y."/>
            <person name="Kokocinski F."/>
            <person name="McDonald L."/>
            <person name="Evans R."/>
            <person name="Phillips K."/>
            <person name="Atkinson A."/>
            <person name="Cooper R."/>
            <person name="Jones C."/>
            <person name="Hall R.E."/>
            <person name="Andrews T.D."/>
            <person name="Lloyd C."/>
            <person name="Ainscough R."/>
            <person name="Almeida J.P."/>
            <person name="Ambrose K.D."/>
            <person name="Anderson F."/>
            <person name="Andrew R.W."/>
            <person name="Ashwell R.I.S."/>
            <person name="Aubin K."/>
            <person name="Babbage A.K."/>
            <person name="Bagguley C.L."/>
            <person name="Bailey J."/>
            <person name="Beasley H."/>
            <person name="Bethel G."/>
            <person name="Bird C.P."/>
            <person name="Bray-Allen S."/>
            <person name="Brown J.Y."/>
            <person name="Brown A.J."/>
            <person name="Buckley D."/>
            <person name="Burton J."/>
            <person name="Bye J."/>
            <person name="Carder C."/>
            <person name="Chapman J.C."/>
            <person name="Clark S.Y."/>
            <person name="Clarke G."/>
            <person name="Clee C."/>
            <person name="Cobley V."/>
            <person name="Collier R.E."/>
            <person name="Corby N."/>
            <person name="Coville G.J."/>
            <person name="Davies J."/>
            <person name="Deadman R."/>
            <person name="Dunn M."/>
            <person name="Earthrowl M."/>
            <person name="Ellington A.G."/>
            <person name="Errington H."/>
            <person name="Frankish A."/>
            <person name="Frankland J."/>
            <person name="French L."/>
            <person name="Garner P."/>
            <person name="Garnett J."/>
            <person name="Gay L."/>
            <person name="Ghori M.R.J."/>
            <person name="Gibson R."/>
            <person name="Gilby L.M."/>
            <person name="Gillett W."/>
            <person name="Glithero R.J."/>
            <person name="Grafham D.V."/>
            <person name="Griffiths C."/>
            <person name="Griffiths-Jones S."/>
            <person name="Grocock R."/>
            <person name="Hammond S."/>
            <person name="Harrison E.S.I."/>
            <person name="Hart E."/>
            <person name="Haugen E."/>
            <person name="Heath P.D."/>
            <person name="Holmes S."/>
            <person name="Holt K."/>
            <person name="Howden P.J."/>
            <person name="Hunt A.R."/>
            <person name="Hunt S.E."/>
            <person name="Hunter G."/>
            <person name="Isherwood J."/>
            <person name="James R."/>
            <person name="Johnson C."/>
            <person name="Johnson D."/>
            <person name="Joy A."/>
            <person name="Kay M."/>
            <person name="Kershaw J.K."/>
            <person name="Kibukawa M."/>
            <person name="Kimberley A.M."/>
            <person name="King A."/>
            <person name="Knights A.J."/>
            <person name="Lad H."/>
            <person name="Laird G."/>
            <person name="Lawlor S."/>
            <person name="Leongamornlert D.A."/>
            <person name="Lloyd D.M."/>
            <person name="Loveland J."/>
            <person name="Lovell J."/>
            <person name="Lush M.J."/>
            <person name="Lyne R."/>
            <person name="Martin S."/>
            <person name="Mashreghi-Mohammadi M."/>
            <person name="Matthews L."/>
            <person name="Matthews N.S.W."/>
            <person name="McLaren S."/>
            <person name="Milne S."/>
            <person name="Mistry S."/>
            <person name="Moore M.J.F."/>
            <person name="Nickerson T."/>
            <person name="O'Dell C.N."/>
            <person name="Oliver K."/>
            <person name="Palmeiri A."/>
            <person name="Palmer S.A."/>
            <person name="Parker A."/>
            <person name="Patel D."/>
            <person name="Pearce A.V."/>
            <person name="Peck A.I."/>
            <person name="Pelan S."/>
            <person name="Phelps K."/>
            <person name="Phillimore B.J."/>
            <person name="Plumb R."/>
            <person name="Rajan J."/>
            <person name="Raymond C."/>
            <person name="Rouse G."/>
            <person name="Saenphimmachak C."/>
            <person name="Sehra H.K."/>
            <person name="Sheridan E."/>
            <person name="Shownkeen R."/>
            <person name="Sims S."/>
            <person name="Skuce C.D."/>
            <person name="Smith M."/>
            <person name="Steward C."/>
            <person name="Subramanian S."/>
            <person name="Sycamore N."/>
            <person name="Tracey A."/>
            <person name="Tromans A."/>
            <person name="Van Helmond Z."/>
            <person name="Wall M."/>
            <person name="Wallis J.M."/>
            <person name="White S."/>
            <person name="Whitehead S.L."/>
            <person name="Wilkinson J.E."/>
            <person name="Willey D.L."/>
            <person name="Williams H."/>
            <person name="Wilming L."/>
            <person name="Wray P.W."/>
            <person name="Wu Z."/>
            <person name="Coulson A."/>
            <person name="Vaudin M."/>
            <person name="Sulston J.E."/>
            <person name="Durbin R.M."/>
            <person name="Hubbard T."/>
            <person name="Wooster R."/>
            <person name="Dunham I."/>
            <person name="Carter N.P."/>
            <person name="McVean G."/>
            <person name="Ross M.T."/>
            <person name="Harrow J."/>
            <person name="Olson M.V."/>
            <person name="Beck S."/>
            <person name="Rogers J."/>
            <person name="Bentley D.R."/>
        </authorList>
    </citation>
    <scope>NUCLEOTIDE SEQUENCE [LARGE SCALE GENOMIC DNA]</scope>
</reference>
<reference key="6">
    <citation type="journal article" date="2004" name="Genome Res.">
        <title>The status, quality, and expansion of the NIH full-length cDNA project: the Mammalian Gene Collection (MGC).</title>
        <authorList>
            <consortium name="The MGC Project Team"/>
        </authorList>
    </citation>
    <scope>NUCLEOTIDE SEQUENCE [LARGE SCALE MRNA] (ISOFORM 1)</scope>
    <scope>VARIANT GLU-22</scope>
    <source>
        <tissue>Pancreas</tissue>
        <tissue>Placenta</tissue>
        <tissue>Skin</tissue>
    </source>
</reference>
<reference key="7">
    <citation type="journal article" date="1989" name="J. Biol. Chem.">
        <title>Tandemly reiterated negative enhancer-like elements regulate transcription of a human gene for the large subunit of calcium-dependent protease.</title>
        <authorList>
            <person name="Hata A."/>
            <person name="Ohno S."/>
            <person name="Akita Y."/>
            <person name="Suzuki K."/>
        </authorList>
    </citation>
    <scope>NUCLEOTIDE SEQUENCE [GENOMIC DNA] OF 1-79</scope>
    <scope>VARIANTS GLU-22 AND GLY-68</scope>
    <source>
        <tissue>Lymph node</tissue>
    </source>
</reference>
<reference key="8">
    <citation type="journal article" date="2003" name="Nat. Biotechnol.">
        <title>Exploring proteomes and analyzing protein processing by mass spectrometric identification of sorted N-terminal peptides.</title>
        <authorList>
            <person name="Gevaert K."/>
            <person name="Goethals M."/>
            <person name="Martens L."/>
            <person name="Van Damme J."/>
            <person name="Staes A."/>
            <person name="Thomas G.R."/>
            <person name="Vandekerckhove J."/>
        </authorList>
    </citation>
    <scope>PROTEIN SEQUENCE OF 2-12</scope>
    <source>
        <tissue>Platelet</tissue>
    </source>
</reference>
<reference key="9">
    <citation type="journal article" date="2007" name="J. Biol. Chem.">
        <title>Characterization of the intracellular proteolytic cleavage of myocilin and identification of calpain II as a myocilin-processing protease.</title>
        <authorList>
            <person name="Sanchez-Sanchez F."/>
            <person name="Martinez-Redondo F."/>
            <person name="Aroca-Aguilar J.D."/>
            <person name="Coca-Prados M."/>
            <person name="Escribano J."/>
        </authorList>
    </citation>
    <scope>FUNCTION</scope>
</reference>
<reference key="10">
    <citation type="journal article" date="2012" name="Proc. Natl. Acad. Sci. U.S.A.">
        <title>N-terminal acetylome analyses and functional insights of the N-terminal acetyltransferase NatB.</title>
        <authorList>
            <person name="Van Damme P."/>
            <person name="Lasa M."/>
            <person name="Polevoda B."/>
            <person name="Gazquez C."/>
            <person name="Elosegui-Artola A."/>
            <person name="Kim D.S."/>
            <person name="De Juan-Pardo E."/>
            <person name="Demeyer K."/>
            <person name="Hole K."/>
            <person name="Larrea E."/>
            <person name="Timmerman E."/>
            <person name="Prieto J."/>
            <person name="Arnesen T."/>
            <person name="Sherman F."/>
            <person name="Gevaert K."/>
            <person name="Aldabe R."/>
        </authorList>
    </citation>
    <scope>ACETYLATION [LARGE SCALE ANALYSIS] AT ALA-2</scope>
    <scope>CLEAVAGE OF INITIATOR METHIONINE [LARGE SCALE ANALYSIS]</scope>
    <scope>IDENTIFICATION BY MASS SPECTROMETRY [LARGE SCALE ANALYSIS]</scope>
</reference>
<reference key="11">
    <citation type="journal article" date="2014" name="J. Proteomics">
        <title>An enzyme assisted RP-RPLC approach for in-depth analysis of human liver phosphoproteome.</title>
        <authorList>
            <person name="Bian Y."/>
            <person name="Song C."/>
            <person name="Cheng K."/>
            <person name="Dong M."/>
            <person name="Wang F."/>
            <person name="Huang J."/>
            <person name="Sun D."/>
            <person name="Wang L."/>
            <person name="Ye M."/>
            <person name="Zou H."/>
        </authorList>
    </citation>
    <scope>IDENTIFICATION BY MASS SPECTROMETRY [LARGE SCALE ANALYSIS]</scope>
    <source>
        <tissue>Liver</tissue>
    </source>
</reference>
<reference key="12">
    <citation type="journal article" date="2025" name="Life. Sci Alliance">
        <title>Noncanonical altPIDD1 protein: unveiling the true major translational output of the PIDD1 gene.</title>
        <authorList>
            <person name="Comtois F."/>
            <person name="Jacques J.F."/>
            <person name="Metayer L."/>
            <person name="Ouedraogo W.Y.D."/>
            <person name="Ouangraoua A."/>
            <person name="Denault J.B."/>
            <person name="Roucou X."/>
        </authorList>
    </citation>
    <scope>INTERACTION WITH ALTPIDD1</scope>
</reference>
<reference key="13">
    <citation type="journal article" date="2000" name="Proc. Natl. Acad. Sci. U.S.A.">
        <title>The crystal structure of calcium-free human m-calpain suggests an electrostatic switch mechanism for activation by calcium.</title>
        <authorList>
            <person name="Strobl S."/>
            <person name="Fernandez-Catalan C."/>
            <person name="Braun M."/>
            <person name="Huber R."/>
            <person name="Masumoto H."/>
            <person name="Nakagawa K."/>
            <person name="Irie A."/>
            <person name="Sorimachi H."/>
            <person name="Bourenkow G."/>
            <person name="Bartunik H."/>
            <person name="Suzuki K."/>
            <person name="Bode W."/>
        </authorList>
    </citation>
    <scope>X-RAY CRYSTALLOGRAPHY (2.5 ANGSTROMS)</scope>
</reference>
<reference key="14">
    <citation type="journal article" date="2011" name="BMC Syst. Biol.">
        <title>Initial characterization of the human central proteome.</title>
        <authorList>
            <person name="Burkard T.R."/>
            <person name="Planyavsky M."/>
            <person name="Kaupe I."/>
            <person name="Breitwieser F.P."/>
            <person name="Buerckstuemmer T."/>
            <person name="Bennett K.L."/>
            <person name="Superti-Furga G."/>
            <person name="Colinge J."/>
        </authorList>
    </citation>
    <scope>VARIANT [LARGE SCALE ANALYSIS] GLU-22</scope>
    <scope>IDENTIFICATION BY MASS SPECTROMETRY [LARGE SCALE ANALYSIS]</scope>
</reference>
<organism>
    <name type="scientific">Homo sapiens</name>
    <name type="common">Human</name>
    <dbReference type="NCBI Taxonomy" id="9606"/>
    <lineage>
        <taxon>Eukaryota</taxon>
        <taxon>Metazoa</taxon>
        <taxon>Chordata</taxon>
        <taxon>Craniata</taxon>
        <taxon>Vertebrata</taxon>
        <taxon>Euteleostomi</taxon>
        <taxon>Mammalia</taxon>
        <taxon>Eutheria</taxon>
        <taxon>Euarchontoglires</taxon>
        <taxon>Primates</taxon>
        <taxon>Haplorrhini</taxon>
        <taxon>Catarrhini</taxon>
        <taxon>Hominidae</taxon>
        <taxon>Homo</taxon>
    </lineage>
</organism>
<evidence type="ECO:0000250" key="1"/>
<evidence type="ECO:0000250" key="2">
    <source>
        <dbReference type="UniProtKB" id="O08529"/>
    </source>
</evidence>
<evidence type="ECO:0000250" key="3">
    <source>
        <dbReference type="UniProtKB" id="Q07009"/>
    </source>
</evidence>
<evidence type="ECO:0000255" key="4"/>
<evidence type="ECO:0000255" key="5">
    <source>
        <dbReference type="PROSITE-ProRule" id="PRU00239"/>
    </source>
</evidence>
<evidence type="ECO:0000255" key="6">
    <source>
        <dbReference type="PROSITE-ProRule" id="PRU00448"/>
    </source>
</evidence>
<evidence type="ECO:0000269" key="7">
    <source>
    </source>
</evidence>
<evidence type="ECO:0000269" key="8">
    <source>
    </source>
</evidence>
<evidence type="ECO:0000269" key="9">
    <source>
    </source>
</evidence>
<evidence type="ECO:0000269" key="10">
    <source>
    </source>
</evidence>
<evidence type="ECO:0000269" key="11">
    <source>
    </source>
</evidence>
<evidence type="ECO:0000269" key="12">
    <source>
    </source>
</evidence>
<evidence type="ECO:0000269" key="13">
    <source>
    </source>
</evidence>
<evidence type="ECO:0000269" key="14">
    <source ref="4"/>
</evidence>
<evidence type="ECO:0000303" key="15">
    <source>
    </source>
</evidence>
<evidence type="ECO:0000305" key="16"/>
<evidence type="ECO:0007744" key="17">
    <source>
    </source>
</evidence>
<evidence type="ECO:0007744" key="18">
    <source>
    </source>
</evidence>
<evidence type="ECO:0007829" key="19">
    <source>
        <dbReference type="PDB" id="1KFU"/>
    </source>
</evidence>
<evidence type="ECO:0007829" key="20">
    <source>
        <dbReference type="PDB" id="1KFX"/>
    </source>
</evidence>
<evidence type="ECO:0007829" key="21">
    <source>
        <dbReference type="PDB" id="2NQA"/>
    </source>
</evidence>
<dbReference type="EC" id="3.4.22.53"/>
<dbReference type="EMBL" id="M23254">
    <property type="protein sequence ID" value="AAA35645.1"/>
    <property type="molecule type" value="mRNA"/>
</dbReference>
<dbReference type="EMBL" id="AF261089">
    <property type="protein sequence ID" value="AAF99682.1"/>
    <property type="molecule type" value="mRNA"/>
</dbReference>
<dbReference type="EMBL" id="AK316211">
    <property type="protein sequence ID" value="BAH14582.1"/>
    <property type="molecule type" value="mRNA"/>
</dbReference>
<dbReference type="EMBL" id="AY835586">
    <property type="protein sequence ID" value="AAV80421.1"/>
    <property type="molecule type" value="Genomic_DNA"/>
</dbReference>
<dbReference type="EMBL" id="AC096542">
    <property type="status" value="NOT_ANNOTATED_CDS"/>
    <property type="molecule type" value="Genomic_DNA"/>
</dbReference>
<dbReference type="EMBL" id="AC099065">
    <property type="status" value="NOT_ANNOTATED_CDS"/>
    <property type="molecule type" value="Genomic_DNA"/>
</dbReference>
<dbReference type="EMBL" id="BC007686">
    <property type="protein sequence ID" value="AAH07686.1"/>
    <property type="status" value="ALT_SEQ"/>
    <property type="molecule type" value="mRNA"/>
</dbReference>
<dbReference type="EMBL" id="BC011828">
    <property type="protein sequence ID" value="AAH11828.1"/>
    <property type="status" value="ALT_SEQ"/>
    <property type="molecule type" value="mRNA"/>
</dbReference>
<dbReference type="EMBL" id="BC021303">
    <property type="protein sequence ID" value="AAH21303.1"/>
    <property type="molecule type" value="mRNA"/>
</dbReference>
<dbReference type="EMBL" id="J04700">
    <property type="protein sequence ID" value="AAA52760.1"/>
    <property type="molecule type" value="Genomic_DNA"/>
</dbReference>
<dbReference type="CCDS" id="CCDS31035.1">
    <molecule id="P17655-1"/>
</dbReference>
<dbReference type="CCDS" id="CCDS53478.1">
    <molecule id="P17655-2"/>
</dbReference>
<dbReference type="PIR" id="S10590">
    <property type="entry name" value="CIHUH2"/>
</dbReference>
<dbReference type="RefSeq" id="NP_001139540.1">
    <molecule id="P17655-2"/>
    <property type="nucleotide sequence ID" value="NM_001146068.2"/>
</dbReference>
<dbReference type="RefSeq" id="NP_001739.3">
    <molecule id="P17655-1"/>
    <property type="nucleotide sequence ID" value="NM_001748.5"/>
</dbReference>
<dbReference type="PDB" id="1KFU">
    <property type="method" value="X-ray"/>
    <property type="resolution" value="2.50 A"/>
    <property type="chains" value="L=2-700"/>
</dbReference>
<dbReference type="PDB" id="1KFX">
    <property type="method" value="X-ray"/>
    <property type="resolution" value="3.15 A"/>
    <property type="chains" value="L=2-700"/>
</dbReference>
<dbReference type="PDB" id="2NQA">
    <property type="method" value="X-ray"/>
    <property type="resolution" value="2.20 A"/>
    <property type="chains" value="A/B=48-346"/>
</dbReference>
<dbReference type="PDBsum" id="1KFU"/>
<dbReference type="PDBsum" id="1KFX"/>
<dbReference type="PDBsum" id="2NQA"/>
<dbReference type="SMR" id="P17655"/>
<dbReference type="BioGRID" id="107274">
    <property type="interactions" value="162"/>
</dbReference>
<dbReference type="ComplexPortal" id="CPX-2674">
    <property type="entry name" value="M-Calpain complex"/>
</dbReference>
<dbReference type="FunCoup" id="P17655">
    <property type="interactions" value="1323"/>
</dbReference>
<dbReference type="IntAct" id="P17655">
    <property type="interactions" value="78"/>
</dbReference>
<dbReference type="MINT" id="P17655"/>
<dbReference type="STRING" id="9606.ENSP00000295006"/>
<dbReference type="BindingDB" id="P17655"/>
<dbReference type="ChEMBL" id="CHEMBL2382"/>
<dbReference type="DrugBank" id="DB18145">
    <property type="generic name" value="Aloxistatin"/>
</dbReference>
<dbReference type="DrugBank" id="DB04813">
    <property type="generic name" value="Bithionol"/>
</dbReference>
<dbReference type="GuidetoPHARMACOLOGY" id="2337"/>
<dbReference type="MEROPS" id="C02.002"/>
<dbReference type="GlyGen" id="P17655">
    <property type="glycosylation" value="1 site, 1 O-linked glycan (1 site)"/>
</dbReference>
<dbReference type="iPTMnet" id="P17655"/>
<dbReference type="MetOSite" id="P17655"/>
<dbReference type="PhosphoSitePlus" id="P17655"/>
<dbReference type="SwissPalm" id="P17655"/>
<dbReference type="BioMuta" id="CAPN2"/>
<dbReference type="DMDM" id="317373596"/>
<dbReference type="CPTAC" id="CPTAC-468"/>
<dbReference type="CPTAC" id="CPTAC-469"/>
<dbReference type="jPOST" id="P17655"/>
<dbReference type="MassIVE" id="P17655"/>
<dbReference type="PaxDb" id="9606-ENSP00000295006"/>
<dbReference type="PeptideAtlas" id="P17655"/>
<dbReference type="ProteomicsDB" id="53499">
    <molecule id="P17655-1"/>
</dbReference>
<dbReference type="ProteomicsDB" id="53500">
    <molecule id="P17655-2"/>
</dbReference>
<dbReference type="Pumba" id="P17655"/>
<dbReference type="Antibodypedia" id="20748">
    <property type="antibodies" value="447 antibodies from 39 providers"/>
</dbReference>
<dbReference type="DNASU" id="824"/>
<dbReference type="Ensembl" id="ENST00000295006.6">
    <molecule id="P17655-1"/>
    <property type="protein sequence ID" value="ENSP00000295006.5"/>
    <property type="gene ID" value="ENSG00000162909.18"/>
</dbReference>
<dbReference type="Ensembl" id="ENST00000433674.6">
    <molecule id="P17655-2"/>
    <property type="protein sequence ID" value="ENSP00000413158.2"/>
    <property type="gene ID" value="ENSG00000162909.18"/>
</dbReference>
<dbReference type="GeneID" id="824"/>
<dbReference type="KEGG" id="hsa:824"/>
<dbReference type="MANE-Select" id="ENST00000295006.6">
    <property type="protein sequence ID" value="ENSP00000295006.5"/>
    <property type="RefSeq nucleotide sequence ID" value="NM_001748.5"/>
    <property type="RefSeq protein sequence ID" value="NP_001739.3"/>
</dbReference>
<dbReference type="UCSC" id="uc001hob.5">
    <molecule id="P17655-1"/>
    <property type="organism name" value="human"/>
</dbReference>
<dbReference type="AGR" id="HGNC:1479"/>
<dbReference type="CTD" id="824"/>
<dbReference type="DisGeNET" id="824"/>
<dbReference type="GeneCards" id="CAPN2"/>
<dbReference type="HGNC" id="HGNC:1479">
    <property type="gene designation" value="CAPN2"/>
</dbReference>
<dbReference type="HPA" id="ENSG00000162909">
    <property type="expression patterns" value="Low tissue specificity"/>
</dbReference>
<dbReference type="MIM" id="114230">
    <property type="type" value="gene"/>
</dbReference>
<dbReference type="neXtProt" id="NX_P17655"/>
<dbReference type="OpenTargets" id="ENSG00000162909"/>
<dbReference type="PharmGKB" id="PA26060"/>
<dbReference type="VEuPathDB" id="HostDB:ENSG00000162909"/>
<dbReference type="eggNOG" id="KOG0045">
    <property type="taxonomic scope" value="Eukaryota"/>
</dbReference>
<dbReference type="GeneTree" id="ENSGT00940000154784"/>
<dbReference type="HOGENOM" id="CLU_010982_0_0_1"/>
<dbReference type="InParanoid" id="P17655"/>
<dbReference type="OMA" id="YRDMDVD"/>
<dbReference type="OrthoDB" id="424753at2759"/>
<dbReference type="PAN-GO" id="P17655">
    <property type="GO annotations" value="3 GO annotations based on evolutionary models"/>
</dbReference>
<dbReference type="PhylomeDB" id="P17655"/>
<dbReference type="TreeFam" id="TF314748"/>
<dbReference type="BRENDA" id="3.4.22.53">
    <property type="organism ID" value="2681"/>
</dbReference>
<dbReference type="PathwayCommons" id="P17655"/>
<dbReference type="Reactome" id="R-HSA-1474228">
    <property type="pathway name" value="Degradation of the extracellular matrix"/>
</dbReference>
<dbReference type="Reactome" id="R-HSA-8862803">
    <property type="pathway name" value="Deregulated CDK5 triggers multiple neurodegenerative pathways in Alzheimer's disease models"/>
</dbReference>
<dbReference type="Reactome" id="R-HSA-9856530">
    <property type="pathway name" value="High laminar flow shear stress activates signaling by PIEZO1 and PECAM1:CDH5:KDR in endothelial cells"/>
</dbReference>
<dbReference type="Reactome" id="R-HSA-9860927">
    <property type="pathway name" value="Turbulent (oscillatory, disturbed) flow shear stress activates signaling by PIEZO1 and integrins in endothelial cells"/>
</dbReference>
<dbReference type="SignaLink" id="P17655"/>
<dbReference type="SIGNOR" id="P17655"/>
<dbReference type="BioGRID-ORCS" id="824">
    <property type="hits" value="17 hits in 1154 CRISPR screens"/>
</dbReference>
<dbReference type="CD-CODE" id="3EAB04FE">
    <property type="entry name" value="Rapsn condensate"/>
</dbReference>
<dbReference type="ChiTaRS" id="CAPN2">
    <property type="organism name" value="human"/>
</dbReference>
<dbReference type="EvolutionaryTrace" id="P17655"/>
<dbReference type="GeneWiki" id="CAPN2"/>
<dbReference type="GenomeRNAi" id="824"/>
<dbReference type="Pharos" id="P17655">
    <property type="development level" value="Tchem"/>
</dbReference>
<dbReference type="PRO" id="PR:P17655"/>
<dbReference type="Proteomes" id="UP000005640">
    <property type="component" value="Chromosome 1"/>
</dbReference>
<dbReference type="RNAct" id="P17655">
    <property type="molecule type" value="protein"/>
</dbReference>
<dbReference type="Bgee" id="ENSG00000162909">
    <property type="expression patterns" value="Expressed in bronchial epithelial cell and 207 other cell types or tissues"/>
</dbReference>
<dbReference type="ExpressionAtlas" id="P17655">
    <property type="expression patterns" value="baseline and differential"/>
</dbReference>
<dbReference type="GO" id="GO:0110158">
    <property type="term" value="C:calpain complex"/>
    <property type="evidence" value="ECO:0000353"/>
    <property type="project" value="ComplexPortal"/>
</dbReference>
<dbReference type="GO" id="GO:0000785">
    <property type="term" value="C:chromatin"/>
    <property type="evidence" value="ECO:0007669"/>
    <property type="project" value="Ensembl"/>
</dbReference>
<dbReference type="GO" id="GO:0030864">
    <property type="term" value="C:cortical actin cytoskeleton"/>
    <property type="evidence" value="ECO:0000304"/>
    <property type="project" value="BHF-UCL"/>
</dbReference>
<dbReference type="GO" id="GO:0005737">
    <property type="term" value="C:cytoplasm"/>
    <property type="evidence" value="ECO:0000250"/>
    <property type="project" value="UniProtKB"/>
</dbReference>
<dbReference type="GO" id="GO:0005829">
    <property type="term" value="C:cytosol"/>
    <property type="evidence" value="ECO:0000314"/>
    <property type="project" value="BHF-UCL"/>
</dbReference>
<dbReference type="GO" id="GO:0030425">
    <property type="term" value="C:dendrite"/>
    <property type="evidence" value="ECO:0000250"/>
    <property type="project" value="UniProtKB"/>
</dbReference>
<dbReference type="GO" id="GO:0005783">
    <property type="term" value="C:endoplasmic reticulum"/>
    <property type="evidence" value="ECO:0000314"/>
    <property type="project" value="BHF-UCL"/>
</dbReference>
<dbReference type="GO" id="GO:0009897">
    <property type="term" value="C:external side of plasma membrane"/>
    <property type="evidence" value="ECO:0007669"/>
    <property type="project" value="Ensembl"/>
</dbReference>
<dbReference type="GO" id="GO:0070062">
    <property type="term" value="C:extracellular exosome"/>
    <property type="evidence" value="ECO:0007005"/>
    <property type="project" value="UniProtKB"/>
</dbReference>
<dbReference type="GO" id="GO:0005925">
    <property type="term" value="C:focal adhesion"/>
    <property type="evidence" value="ECO:0007005"/>
    <property type="project" value="UniProtKB"/>
</dbReference>
<dbReference type="GO" id="GO:0005794">
    <property type="term" value="C:Golgi apparatus"/>
    <property type="evidence" value="ECO:0000314"/>
    <property type="project" value="BHF-UCL"/>
</dbReference>
<dbReference type="GO" id="GO:0005764">
    <property type="term" value="C:lysosome"/>
    <property type="evidence" value="ECO:0007669"/>
    <property type="project" value="Ensembl"/>
</dbReference>
<dbReference type="GO" id="GO:0045121">
    <property type="term" value="C:membrane raft"/>
    <property type="evidence" value="ECO:0000314"/>
    <property type="project" value="BHF-UCL"/>
</dbReference>
<dbReference type="GO" id="GO:0043025">
    <property type="term" value="C:neuronal cell body"/>
    <property type="evidence" value="ECO:0007669"/>
    <property type="project" value="Ensembl"/>
</dbReference>
<dbReference type="GO" id="GO:0005634">
    <property type="term" value="C:nucleus"/>
    <property type="evidence" value="ECO:0007669"/>
    <property type="project" value="Ensembl"/>
</dbReference>
<dbReference type="GO" id="GO:0097038">
    <property type="term" value="C:perinuclear endoplasmic reticulum"/>
    <property type="evidence" value="ECO:0000314"/>
    <property type="project" value="BHF-UCL"/>
</dbReference>
<dbReference type="GO" id="GO:0005886">
    <property type="term" value="C:plasma membrane"/>
    <property type="evidence" value="ECO:0000314"/>
    <property type="project" value="BHF-UCL"/>
</dbReference>
<dbReference type="GO" id="GO:0098794">
    <property type="term" value="C:postsynapse"/>
    <property type="evidence" value="ECO:0007669"/>
    <property type="project" value="Ensembl"/>
</dbReference>
<dbReference type="GO" id="GO:0098793">
    <property type="term" value="C:presynapse"/>
    <property type="evidence" value="ECO:0007669"/>
    <property type="project" value="GOC"/>
</dbReference>
<dbReference type="GO" id="GO:0031143">
    <property type="term" value="C:pseudopodium"/>
    <property type="evidence" value="ECO:0000314"/>
    <property type="project" value="BHF-UCL"/>
</dbReference>
<dbReference type="GO" id="GO:0005509">
    <property type="term" value="F:calcium ion binding"/>
    <property type="evidence" value="ECO:0007669"/>
    <property type="project" value="Ensembl"/>
</dbReference>
<dbReference type="GO" id="GO:0004198">
    <property type="term" value="F:calcium-dependent cysteine-type endopeptidase activity"/>
    <property type="evidence" value="ECO:0000314"/>
    <property type="project" value="BHF-UCL"/>
</dbReference>
<dbReference type="GO" id="GO:0008234">
    <property type="term" value="F:cysteine-type peptidase activity"/>
    <property type="evidence" value="ECO:0000304"/>
    <property type="project" value="ProtInc"/>
</dbReference>
<dbReference type="GO" id="GO:0008092">
    <property type="term" value="F:cytoskeletal protein binding"/>
    <property type="evidence" value="ECO:0000303"/>
    <property type="project" value="BHF-UCL"/>
</dbReference>
<dbReference type="GO" id="GO:0019899">
    <property type="term" value="F:enzyme binding"/>
    <property type="evidence" value="ECO:0007669"/>
    <property type="project" value="Ensembl"/>
</dbReference>
<dbReference type="GO" id="GO:0044877">
    <property type="term" value="F:protein-containing complex binding"/>
    <property type="evidence" value="ECO:0007669"/>
    <property type="project" value="Ensembl"/>
</dbReference>
<dbReference type="GO" id="GO:0048266">
    <property type="term" value="P:behavioral response to pain"/>
    <property type="evidence" value="ECO:0007669"/>
    <property type="project" value="Ensembl"/>
</dbReference>
<dbReference type="GO" id="GO:0001824">
    <property type="term" value="P:blastocyst development"/>
    <property type="evidence" value="ECO:0007669"/>
    <property type="project" value="Ensembl"/>
</dbReference>
<dbReference type="GO" id="GO:0071230">
    <property type="term" value="P:cellular response to amino acid stimulus"/>
    <property type="evidence" value="ECO:0000250"/>
    <property type="project" value="UniProtKB"/>
</dbReference>
<dbReference type="GO" id="GO:0035458">
    <property type="term" value="P:cellular response to interferon-beta"/>
    <property type="evidence" value="ECO:0007669"/>
    <property type="project" value="Ensembl"/>
</dbReference>
<dbReference type="GO" id="GO:0071222">
    <property type="term" value="P:cellular response to lipopolysaccharide"/>
    <property type="evidence" value="ECO:0007669"/>
    <property type="project" value="Ensembl"/>
</dbReference>
<dbReference type="GO" id="GO:0007565">
    <property type="term" value="P:female pregnancy"/>
    <property type="evidence" value="ECO:0007669"/>
    <property type="project" value="Ensembl"/>
</dbReference>
<dbReference type="GO" id="GO:0007520">
    <property type="term" value="P:myoblast fusion"/>
    <property type="evidence" value="ECO:0007669"/>
    <property type="project" value="Ensembl"/>
</dbReference>
<dbReference type="GO" id="GO:0010666">
    <property type="term" value="P:positive regulation of cardiac muscle cell apoptotic process"/>
    <property type="evidence" value="ECO:0007669"/>
    <property type="project" value="Ensembl"/>
</dbReference>
<dbReference type="GO" id="GO:1901741">
    <property type="term" value="P:positive regulation of myoblast fusion"/>
    <property type="evidence" value="ECO:0007669"/>
    <property type="project" value="Ensembl"/>
</dbReference>
<dbReference type="GO" id="GO:2001247">
    <property type="term" value="P:positive regulation of phosphatidylcholine biosynthetic process"/>
    <property type="evidence" value="ECO:0007669"/>
    <property type="project" value="Ensembl"/>
</dbReference>
<dbReference type="GO" id="GO:0016540">
    <property type="term" value="P:protein autoprocessing"/>
    <property type="evidence" value="ECO:0007669"/>
    <property type="project" value="Ensembl"/>
</dbReference>
<dbReference type="GO" id="GO:0140249">
    <property type="term" value="P:protein catabolic process at postsynapse"/>
    <property type="evidence" value="ECO:0007669"/>
    <property type="project" value="Ensembl"/>
</dbReference>
<dbReference type="GO" id="GO:0006508">
    <property type="term" value="P:proteolysis"/>
    <property type="evidence" value="ECO:0000250"/>
    <property type="project" value="UniProtKB"/>
</dbReference>
<dbReference type="GO" id="GO:0051603">
    <property type="term" value="P:proteolysis involved in protein catabolic process"/>
    <property type="evidence" value="ECO:0000314"/>
    <property type="project" value="BHF-UCL"/>
</dbReference>
<dbReference type="GO" id="GO:0051493">
    <property type="term" value="P:regulation of cytoskeleton organization"/>
    <property type="evidence" value="ECO:0000304"/>
    <property type="project" value="BHF-UCL"/>
</dbReference>
<dbReference type="GO" id="GO:0032675">
    <property type="term" value="P:regulation of interleukin-6 production"/>
    <property type="evidence" value="ECO:0007669"/>
    <property type="project" value="Ensembl"/>
</dbReference>
<dbReference type="GO" id="GO:0042542">
    <property type="term" value="P:response to hydrogen peroxide"/>
    <property type="evidence" value="ECO:0007669"/>
    <property type="project" value="Ensembl"/>
</dbReference>
<dbReference type="GO" id="GO:0001666">
    <property type="term" value="P:response to hypoxia"/>
    <property type="evidence" value="ECO:0007669"/>
    <property type="project" value="Ensembl"/>
</dbReference>
<dbReference type="GO" id="GO:0009612">
    <property type="term" value="P:response to mechanical stimulus"/>
    <property type="evidence" value="ECO:0007669"/>
    <property type="project" value="Ensembl"/>
</dbReference>
<dbReference type="GO" id="GO:0048488">
    <property type="term" value="P:synaptic vesicle endocytosis"/>
    <property type="evidence" value="ECO:0007669"/>
    <property type="project" value="Ensembl"/>
</dbReference>
<dbReference type="GO" id="GO:0097700">
    <property type="term" value="P:vascular endothelial cell response to laminar fluid shear stress"/>
    <property type="evidence" value="ECO:0000304"/>
    <property type="project" value="Reactome"/>
</dbReference>
<dbReference type="GO" id="GO:0097706">
    <property type="term" value="P:vascular endothelial cell response to oscillatory fluid shear stress"/>
    <property type="evidence" value="ECO:0000304"/>
    <property type="project" value="Reactome"/>
</dbReference>
<dbReference type="CDD" id="cd00214">
    <property type="entry name" value="Calpain_III"/>
    <property type="match status" value="1"/>
</dbReference>
<dbReference type="CDD" id="cd00044">
    <property type="entry name" value="CysPc"/>
    <property type="match status" value="1"/>
</dbReference>
<dbReference type="CDD" id="cd16199">
    <property type="entry name" value="EFh_PEF_CAPN2"/>
    <property type="match status" value="1"/>
</dbReference>
<dbReference type="FunFam" id="2.60.120.380:FF:000001">
    <property type="entry name" value="Calpain-1 catalytic subunit"/>
    <property type="match status" value="1"/>
</dbReference>
<dbReference type="FunFam" id="3.90.70.10:FF:000001">
    <property type="entry name" value="Calpain-1 catalytic subunit"/>
    <property type="match status" value="1"/>
</dbReference>
<dbReference type="FunFam" id="1.10.238.10:FF:000099">
    <property type="entry name" value="calpain-2 catalytic subunit"/>
    <property type="match status" value="1"/>
</dbReference>
<dbReference type="Gene3D" id="2.60.120.380">
    <property type="match status" value="1"/>
</dbReference>
<dbReference type="Gene3D" id="3.90.70.10">
    <property type="entry name" value="Cysteine proteinases"/>
    <property type="match status" value="1"/>
</dbReference>
<dbReference type="Gene3D" id="1.10.238.10">
    <property type="entry name" value="EF-hand"/>
    <property type="match status" value="1"/>
</dbReference>
<dbReference type="InterPro" id="IPR033883">
    <property type="entry name" value="C2_III"/>
</dbReference>
<dbReference type="InterPro" id="IPR022684">
    <property type="entry name" value="Calpain_cysteine_protease"/>
</dbReference>
<dbReference type="InterPro" id="IPR022682">
    <property type="entry name" value="Calpain_domain_III"/>
</dbReference>
<dbReference type="InterPro" id="IPR022683">
    <property type="entry name" value="Calpain_III"/>
</dbReference>
<dbReference type="InterPro" id="IPR036213">
    <property type="entry name" value="Calpain_III_sf"/>
</dbReference>
<dbReference type="InterPro" id="IPR011992">
    <property type="entry name" value="EF-hand-dom_pair"/>
</dbReference>
<dbReference type="InterPro" id="IPR018247">
    <property type="entry name" value="EF_Hand_1_Ca_BS"/>
</dbReference>
<dbReference type="InterPro" id="IPR002048">
    <property type="entry name" value="EF_hand_dom"/>
</dbReference>
<dbReference type="InterPro" id="IPR042736">
    <property type="entry name" value="EFh_PEF_CAPN2"/>
</dbReference>
<dbReference type="InterPro" id="IPR038765">
    <property type="entry name" value="Papain-like_cys_pep_sf"/>
</dbReference>
<dbReference type="InterPro" id="IPR000169">
    <property type="entry name" value="Pept_cys_AS"/>
</dbReference>
<dbReference type="InterPro" id="IPR001300">
    <property type="entry name" value="Peptidase_C2_calpain_cat"/>
</dbReference>
<dbReference type="PANTHER" id="PTHR10183">
    <property type="entry name" value="CALPAIN"/>
    <property type="match status" value="1"/>
</dbReference>
<dbReference type="PANTHER" id="PTHR10183:SF268">
    <property type="entry name" value="CALPAIN-2 CATALYTIC SUBUNIT"/>
    <property type="match status" value="1"/>
</dbReference>
<dbReference type="Pfam" id="PF01067">
    <property type="entry name" value="Calpain_III"/>
    <property type="match status" value="1"/>
</dbReference>
<dbReference type="Pfam" id="PF13833">
    <property type="entry name" value="EF-hand_8"/>
    <property type="match status" value="1"/>
</dbReference>
<dbReference type="Pfam" id="PF00648">
    <property type="entry name" value="Peptidase_C2"/>
    <property type="match status" value="1"/>
</dbReference>
<dbReference type="PRINTS" id="PR00704">
    <property type="entry name" value="CALPAIN"/>
</dbReference>
<dbReference type="SMART" id="SM00720">
    <property type="entry name" value="calpain_III"/>
    <property type="match status" value="1"/>
</dbReference>
<dbReference type="SMART" id="SM00230">
    <property type="entry name" value="CysPc"/>
    <property type="match status" value="1"/>
</dbReference>
<dbReference type="SUPFAM" id="SSF49758">
    <property type="entry name" value="Calpain large subunit, middle domain (domain III)"/>
    <property type="match status" value="1"/>
</dbReference>
<dbReference type="SUPFAM" id="SSF54001">
    <property type="entry name" value="Cysteine proteinases"/>
    <property type="match status" value="1"/>
</dbReference>
<dbReference type="SUPFAM" id="SSF47473">
    <property type="entry name" value="EF-hand"/>
    <property type="match status" value="1"/>
</dbReference>
<dbReference type="PROSITE" id="PS50203">
    <property type="entry name" value="CALPAIN_CAT"/>
    <property type="match status" value="1"/>
</dbReference>
<dbReference type="PROSITE" id="PS00018">
    <property type="entry name" value="EF_HAND_1"/>
    <property type="match status" value="2"/>
</dbReference>
<dbReference type="PROSITE" id="PS50222">
    <property type="entry name" value="EF_HAND_2"/>
    <property type="match status" value="3"/>
</dbReference>
<dbReference type="PROSITE" id="PS00139">
    <property type="entry name" value="THIOL_PROTEASE_CYS"/>
    <property type="match status" value="1"/>
</dbReference>
<gene>
    <name type="primary">CAPN2</name>
    <name type="synonym">CANPL2</name>
</gene>
<keyword id="KW-0002">3D-structure</keyword>
<keyword id="KW-0007">Acetylation</keyword>
<keyword id="KW-0025">Alternative splicing</keyword>
<keyword id="KW-0106">Calcium</keyword>
<keyword id="KW-1003">Cell membrane</keyword>
<keyword id="KW-0963">Cytoplasm</keyword>
<keyword id="KW-0903">Direct protein sequencing</keyword>
<keyword id="KW-0378">Hydrolase</keyword>
<keyword id="KW-0472">Membrane</keyword>
<keyword id="KW-0479">Metal-binding</keyword>
<keyword id="KW-0645">Protease</keyword>
<keyword id="KW-1267">Proteomics identification</keyword>
<keyword id="KW-1185">Reference proteome</keyword>
<keyword id="KW-0677">Repeat</keyword>
<keyword id="KW-0788">Thiol protease</keyword>
<feature type="initiator methionine" description="Removed" evidence="8 18">
    <location>
        <position position="1"/>
    </location>
</feature>
<feature type="propeptide" id="PRO_0000026487" description="Anchors to the small subunit" evidence="4">
    <location>
        <begin position="2"/>
        <end position="19"/>
    </location>
</feature>
<feature type="chain" id="PRO_0000026488" description="Calpain-2 catalytic subunit">
    <location>
        <begin position="20"/>
        <end position="700"/>
    </location>
</feature>
<feature type="domain" description="Calpain catalytic" evidence="5">
    <location>
        <begin position="45"/>
        <end position="344"/>
    </location>
</feature>
<feature type="domain" description="EF-hand 1" evidence="6">
    <location>
        <begin position="572"/>
        <end position="605"/>
    </location>
</feature>
<feature type="domain" description="EF-hand 2" evidence="6">
    <location>
        <begin position="602"/>
        <end position="637"/>
    </location>
</feature>
<feature type="domain" description="EF-hand 3" evidence="6">
    <location>
        <begin position="667"/>
        <end position="700"/>
    </location>
</feature>
<feature type="region of interest" description="Domain III">
    <location>
        <begin position="345"/>
        <end position="514"/>
    </location>
</feature>
<feature type="region of interest" description="Linker">
    <location>
        <begin position="515"/>
        <end position="529"/>
    </location>
</feature>
<feature type="region of interest" description="Domain IV">
    <location>
        <begin position="530"/>
        <end position="700"/>
    </location>
</feature>
<feature type="active site" evidence="1">
    <location>
        <position position="105"/>
    </location>
</feature>
<feature type="active site" evidence="1">
    <location>
        <position position="262"/>
    </location>
</feature>
<feature type="active site" evidence="1">
    <location>
        <position position="286"/>
    </location>
</feature>
<feature type="binding site" evidence="1">
    <location>
        <position position="89"/>
    </location>
    <ligand>
        <name>Ca(2+)</name>
        <dbReference type="ChEBI" id="CHEBI:29108"/>
        <label>3</label>
    </ligand>
</feature>
<feature type="binding site" evidence="1">
    <location>
        <position position="91"/>
    </location>
    <ligand>
        <name>Ca(2+)</name>
        <dbReference type="ChEBI" id="CHEBI:29108"/>
        <label>3</label>
    </ligand>
</feature>
<feature type="binding site" evidence="1">
    <location>
        <position position="96"/>
    </location>
    <ligand>
        <name>Ca(2+)</name>
        <dbReference type="ChEBI" id="CHEBI:29108"/>
        <label>3</label>
    </ligand>
</feature>
<feature type="binding site" evidence="1">
    <location>
        <position position="175"/>
    </location>
    <ligand>
        <name>Ca(2+)</name>
        <dbReference type="ChEBI" id="CHEBI:29108"/>
        <label>3</label>
    </ligand>
</feature>
<feature type="binding site" evidence="1">
    <location>
        <position position="229"/>
    </location>
    <ligand>
        <name>Ca(2+)</name>
        <dbReference type="ChEBI" id="CHEBI:29108"/>
        <label>2</label>
    </ligand>
</feature>
<feature type="binding site" evidence="1">
    <location>
        <position position="230"/>
    </location>
    <ligand>
        <name>Ca(2+)</name>
        <dbReference type="ChEBI" id="CHEBI:29108"/>
        <label>2</label>
    </ligand>
</feature>
<feature type="binding site" evidence="1">
    <location>
        <position position="292"/>
    </location>
    <ligand>
        <name>Ca(2+)</name>
        <dbReference type="ChEBI" id="CHEBI:29108"/>
        <label>4</label>
    </ligand>
</feature>
<feature type="binding site" evidence="1">
    <location>
        <position position="299"/>
    </location>
    <ligand>
        <name>Ca(2+)</name>
        <dbReference type="ChEBI" id="CHEBI:29108"/>
        <label>4</label>
    </ligand>
</feature>
<feature type="binding site" evidence="1">
    <location>
        <position position="323"/>
    </location>
    <ligand>
        <name>Ca(2+)</name>
        <dbReference type="ChEBI" id="CHEBI:29108"/>
        <label>4</label>
    </ligand>
</feature>
<feature type="binding site" evidence="1">
    <location>
        <position position="542"/>
    </location>
    <ligand>
        <name>Ca(2+)</name>
        <dbReference type="ChEBI" id="CHEBI:29108"/>
        <label>5</label>
    </ligand>
</feature>
<feature type="binding site" evidence="1">
    <location>
        <position position="545"/>
    </location>
    <ligand>
        <name>Ca(2+)</name>
        <dbReference type="ChEBI" id="CHEBI:29108"/>
        <label>5</label>
    </ligand>
</feature>
<feature type="binding site" evidence="1">
    <location>
        <position position="547"/>
    </location>
    <ligand>
        <name>Ca(2+)</name>
        <dbReference type="ChEBI" id="CHEBI:29108"/>
        <label>5</label>
    </ligand>
</feature>
<feature type="binding site" evidence="1">
    <location>
        <position position="552"/>
    </location>
    <ligand>
        <name>Ca(2+)</name>
        <dbReference type="ChEBI" id="CHEBI:29108"/>
        <label>5</label>
    </ligand>
</feature>
<feature type="binding site" evidence="6">
    <location>
        <position position="585"/>
    </location>
    <ligand>
        <name>Ca(2+)</name>
        <dbReference type="ChEBI" id="CHEBI:29108"/>
        <label>6</label>
    </ligand>
</feature>
<feature type="binding site" evidence="6">
    <location>
        <position position="587"/>
    </location>
    <ligand>
        <name>Ca(2+)</name>
        <dbReference type="ChEBI" id="CHEBI:29108"/>
        <label>6</label>
    </ligand>
</feature>
<feature type="binding site" evidence="6">
    <location>
        <position position="589"/>
    </location>
    <ligand>
        <name>Ca(2+)</name>
        <dbReference type="ChEBI" id="CHEBI:29108"/>
        <label>6</label>
    </ligand>
</feature>
<feature type="binding site" evidence="6">
    <location>
        <position position="591"/>
    </location>
    <ligand>
        <name>Ca(2+)</name>
        <dbReference type="ChEBI" id="CHEBI:29108"/>
        <label>6</label>
    </ligand>
</feature>
<feature type="binding site" evidence="6">
    <location>
        <position position="596"/>
    </location>
    <ligand>
        <name>Ca(2+)</name>
        <dbReference type="ChEBI" id="CHEBI:29108"/>
        <label>6</label>
    </ligand>
</feature>
<feature type="binding site" evidence="6">
    <location>
        <position position="615"/>
    </location>
    <ligand>
        <name>Ca(2+)</name>
        <dbReference type="ChEBI" id="CHEBI:29108"/>
        <label>7</label>
    </ligand>
</feature>
<feature type="binding site" evidence="6">
    <location>
        <position position="617"/>
    </location>
    <ligand>
        <name>Ca(2+)</name>
        <dbReference type="ChEBI" id="CHEBI:29108"/>
        <label>7</label>
    </ligand>
</feature>
<feature type="binding site" evidence="6">
    <location>
        <position position="619"/>
    </location>
    <ligand>
        <name>Ca(2+)</name>
        <dbReference type="ChEBI" id="CHEBI:29108"/>
        <label>7</label>
    </ligand>
</feature>
<feature type="binding site" evidence="6">
    <location>
        <position position="621"/>
    </location>
    <ligand>
        <name>Ca(2+)</name>
        <dbReference type="ChEBI" id="CHEBI:29108"/>
        <label>7</label>
    </ligand>
</feature>
<feature type="binding site" evidence="6">
    <location>
        <position position="626"/>
    </location>
    <ligand>
        <name>Ca(2+)</name>
        <dbReference type="ChEBI" id="CHEBI:29108"/>
        <label>7</label>
    </ligand>
</feature>
<feature type="binding site" evidence="1">
    <location>
        <position position="658"/>
    </location>
    <ligand>
        <name>Ca(2+)</name>
        <dbReference type="ChEBI" id="CHEBI:29108"/>
        <label>1</label>
    </ligand>
</feature>
<feature type="binding site" evidence="1">
    <location>
        <position position="661"/>
    </location>
    <ligand>
        <name>Ca(2+)</name>
        <dbReference type="ChEBI" id="CHEBI:29108"/>
        <label>1</label>
    </ligand>
</feature>
<feature type="modified residue" description="N-acetylalanine" evidence="18">
    <location>
        <position position="2"/>
    </location>
</feature>
<feature type="splice variant" id="VSP_043027" description="In isoform 2." evidence="15">
    <location>
        <begin position="1"/>
        <end position="78"/>
    </location>
</feature>
<feature type="splice variant" id="VSP_043028" description="In isoform 2." evidence="15">
    <original>T</original>
    <variation>M</variation>
    <location>
        <position position="79"/>
    </location>
</feature>
<feature type="sequence variant" id="VAR_014435" description="In dbSNP:rs25655." evidence="7 9 11 12 14 17">
    <original>D</original>
    <variation>E</variation>
    <location>
        <position position="22"/>
    </location>
</feature>
<feature type="sequence variant" id="VAR_021404" description="In dbSNP:rs2230083." evidence="11 14">
    <original>S</original>
    <variation>G</variation>
    <location>
        <position position="68"/>
    </location>
</feature>
<feature type="sequence variant" id="VAR_021405" description="In dbSNP:rs9804140." evidence="14">
    <original>K</original>
    <variation>R</variation>
    <location>
        <position position="476"/>
    </location>
</feature>
<feature type="sequence variant" id="VAR_021406" description="In dbSNP:rs28370127." evidence="14">
    <original>E</original>
    <variation>Q</variation>
    <location>
        <position position="521"/>
    </location>
</feature>
<feature type="sequence variant" id="VAR_014436" description="In dbSNP:rs17599." evidence="14">
    <original>K</original>
    <variation>Q</variation>
    <location>
        <position position="568"/>
    </location>
</feature>
<feature type="sequence variant" id="VAR_021407" description="In dbSNP:rs2230082." evidence="14">
    <original>K</original>
    <variation>Q</variation>
    <location>
        <position position="677"/>
    </location>
</feature>
<feature type="sequence conflict" description="In Ref. 1; AAA35645." evidence="16" ref="1">
    <original>IE</original>
    <variation>MR</variation>
    <location>
        <begin position="73"/>
        <end position="74"/>
    </location>
</feature>
<feature type="sequence conflict" description="In Ref. 2; AAF99682." evidence="16" ref="2">
    <original>Q</original>
    <variation>K</variation>
    <location>
        <position position="256"/>
    </location>
</feature>
<feature type="sequence conflict" description="In Ref. 2; AAF99682." evidence="16" ref="2">
    <original>N</original>
    <variation>S</variation>
    <location>
        <position position="300"/>
    </location>
</feature>
<feature type="sequence conflict" description="In Ref. 1; AAA35645 and 2; AAF99682." evidence="16" ref="1 2">
    <original>F</original>
    <variation>V</variation>
    <location>
        <position position="534"/>
    </location>
</feature>
<feature type="helix" evidence="19">
    <location>
        <begin position="4"/>
        <end position="16"/>
    </location>
</feature>
<feature type="turn" evidence="19">
    <location>
        <begin position="17"/>
        <end position="19"/>
    </location>
</feature>
<feature type="helix" evidence="21">
    <location>
        <begin position="27"/>
        <end position="29"/>
    </location>
</feature>
<feature type="helix" evidence="21">
    <location>
        <begin position="32"/>
        <end position="42"/>
    </location>
</feature>
<feature type="strand" evidence="19">
    <location>
        <begin position="49"/>
        <end position="51"/>
    </location>
</feature>
<feature type="helix" evidence="21">
    <location>
        <begin position="55"/>
        <end position="58"/>
    </location>
</feature>
<feature type="strand" evidence="19">
    <location>
        <begin position="60"/>
        <end position="68"/>
    </location>
</feature>
<feature type="strand" evidence="21">
    <location>
        <begin position="74"/>
        <end position="76"/>
    </location>
</feature>
<feature type="helix" evidence="21">
    <location>
        <begin position="78"/>
        <end position="81"/>
    </location>
</feature>
<feature type="strand" evidence="20">
    <location>
        <begin position="82"/>
        <end position="84"/>
    </location>
</feature>
<feature type="helix" evidence="21">
    <location>
        <begin position="94"/>
        <end position="96"/>
    </location>
</feature>
<feature type="strand" evidence="20">
    <location>
        <begin position="97"/>
        <end position="99"/>
    </location>
</feature>
<feature type="helix" evidence="21">
    <location>
        <begin position="105"/>
        <end position="115"/>
    </location>
</feature>
<feature type="helix" evidence="21">
    <location>
        <begin position="118"/>
        <end position="124"/>
    </location>
</feature>
<feature type="strand" evidence="19">
    <location>
        <begin position="131"/>
        <end position="134"/>
    </location>
</feature>
<feature type="strand" evidence="21">
    <location>
        <begin position="136"/>
        <end position="144"/>
    </location>
</feature>
<feature type="strand" evidence="21">
    <location>
        <begin position="146"/>
        <end position="155"/>
    </location>
</feature>
<feature type="strand" evidence="21">
    <location>
        <begin position="158"/>
        <end position="161"/>
    </location>
</feature>
<feature type="strand" evidence="21">
    <location>
        <begin position="164"/>
        <end position="167"/>
    </location>
</feature>
<feature type="strand" evidence="19">
    <location>
        <begin position="169"/>
        <end position="175"/>
    </location>
</feature>
<feature type="helix" evidence="21">
    <location>
        <begin position="177"/>
        <end position="189"/>
    </location>
</feature>
<feature type="strand" evidence="21">
    <location>
        <begin position="190"/>
        <end position="192"/>
    </location>
</feature>
<feature type="helix" evidence="21">
    <location>
        <begin position="193"/>
        <end position="195"/>
    </location>
</feature>
<feature type="strand" evidence="21">
    <location>
        <begin position="196"/>
        <end position="199"/>
    </location>
</feature>
<feature type="turn" evidence="21">
    <location>
        <begin position="204"/>
        <end position="206"/>
    </location>
</feature>
<feature type="helix" evidence="21">
    <location>
        <begin position="207"/>
        <end position="209"/>
    </location>
</feature>
<feature type="strand" evidence="21">
    <location>
        <begin position="212"/>
        <end position="216"/>
    </location>
</feature>
<feature type="helix" evidence="21">
    <location>
        <begin position="224"/>
        <end position="233"/>
    </location>
</feature>
<feature type="strand" evidence="21">
    <location>
        <begin position="237"/>
        <end position="241"/>
    </location>
</feature>
<feature type="helix" evidence="21">
    <location>
        <begin position="247"/>
        <end position="249"/>
    </location>
</feature>
<feature type="strand" evidence="21">
    <location>
        <begin position="259"/>
        <end position="261"/>
    </location>
</feature>
<feature type="strand" evidence="21">
    <location>
        <begin position="264"/>
        <end position="274"/>
    </location>
</feature>
<feature type="strand" evidence="21">
    <location>
        <begin position="277"/>
        <end position="285"/>
    </location>
</feature>
<feature type="strand" evidence="19">
    <location>
        <begin position="294"/>
        <end position="297"/>
    </location>
</feature>
<feature type="strand" evidence="19">
    <location>
        <begin position="299"/>
        <end position="301"/>
    </location>
</feature>
<feature type="helix" evidence="21">
    <location>
        <begin position="302"/>
        <end position="306"/>
    </location>
</feature>
<feature type="helix" evidence="21">
    <location>
        <begin position="309"/>
        <end position="315"/>
    </location>
</feature>
<feature type="strand" evidence="21">
    <location>
        <begin position="321"/>
        <end position="327"/>
    </location>
</feature>
<feature type="helix" evidence="21">
    <location>
        <begin position="328"/>
        <end position="334"/>
    </location>
</feature>
<feature type="strand" evidence="21">
    <location>
        <begin position="336"/>
        <end position="341"/>
    </location>
</feature>
<feature type="helix" evidence="19">
    <location>
        <begin position="344"/>
        <end position="346"/>
    </location>
</feature>
<feature type="strand" evidence="19">
    <location>
        <begin position="347"/>
        <end position="349"/>
    </location>
</feature>
<feature type="strand" evidence="19">
    <location>
        <begin position="363"/>
        <end position="365"/>
    </location>
</feature>
<feature type="turn" evidence="19">
    <location>
        <begin position="367"/>
        <end position="370"/>
    </location>
</feature>
<feature type="turn" evidence="19">
    <location>
        <begin position="378"/>
        <end position="380"/>
    </location>
</feature>
<feature type="helix" evidence="19">
    <location>
        <begin position="381"/>
        <end position="383"/>
    </location>
</feature>
<feature type="strand" evidence="19">
    <location>
        <begin position="388"/>
        <end position="390"/>
    </location>
</feature>
<feature type="strand" evidence="19">
    <location>
        <begin position="400"/>
        <end position="402"/>
    </location>
</feature>
<feature type="strand" evidence="19">
    <location>
        <begin position="406"/>
        <end position="413"/>
    </location>
</feature>
<feature type="strand" evidence="19">
    <location>
        <begin position="420"/>
        <end position="425"/>
    </location>
</feature>
<feature type="strand" evidence="19">
    <location>
        <begin position="429"/>
        <end position="435"/>
    </location>
</feature>
<feature type="turn" evidence="19">
    <location>
        <begin position="442"/>
        <end position="444"/>
    </location>
</feature>
<feature type="helix" evidence="19">
    <location>
        <begin position="450"/>
        <end position="455"/>
    </location>
</feature>
<feature type="strand" evidence="20">
    <location>
        <begin position="459"/>
        <end position="461"/>
    </location>
</feature>
<feature type="strand" evidence="19">
    <location>
        <begin position="466"/>
        <end position="471"/>
    </location>
</feature>
<feature type="strand" evidence="19">
    <location>
        <begin position="474"/>
        <end position="476"/>
    </location>
</feature>
<feature type="strand" evidence="19">
    <location>
        <begin position="479"/>
        <end position="492"/>
    </location>
</feature>
<feature type="strand" evidence="19">
    <location>
        <begin position="495"/>
        <end position="505"/>
    </location>
</feature>
<feature type="strand" evidence="20">
    <location>
        <begin position="507"/>
        <end position="509"/>
    </location>
</feature>
<feature type="strand" evidence="19">
    <location>
        <begin position="527"/>
        <end position="530"/>
    </location>
</feature>
<feature type="helix" evidence="19">
    <location>
        <begin position="533"/>
        <end position="541"/>
    </location>
</feature>
<feature type="strand" evidence="19">
    <location>
        <begin position="542"/>
        <end position="546"/>
    </location>
</feature>
<feature type="helix" evidence="19">
    <location>
        <begin position="550"/>
        <end position="560"/>
    </location>
</feature>
<feature type="turn" evidence="19">
    <location>
        <begin position="561"/>
        <end position="564"/>
    </location>
</feature>
<feature type="helix" evidence="19">
    <location>
        <begin position="574"/>
        <end position="582"/>
    </location>
</feature>
<feature type="strand" evidence="19">
    <location>
        <begin position="586"/>
        <end position="588"/>
    </location>
</feature>
<feature type="strand" evidence="19">
    <location>
        <begin position="590"/>
        <end position="592"/>
    </location>
</feature>
<feature type="helix" evidence="19">
    <location>
        <begin position="595"/>
        <end position="612"/>
    </location>
</feature>
<feature type="strand" evidence="19">
    <location>
        <begin position="622"/>
        <end position="624"/>
    </location>
</feature>
<feature type="helix" evidence="19">
    <location>
        <begin position="627"/>
        <end position="630"/>
    </location>
</feature>
<feature type="turn" evidence="19">
    <location>
        <begin position="631"/>
        <end position="635"/>
    </location>
</feature>
<feature type="helix" evidence="19">
    <location>
        <begin position="640"/>
        <end position="650"/>
    </location>
</feature>
<feature type="strand" evidence="19">
    <location>
        <begin position="655"/>
        <end position="657"/>
    </location>
</feature>
<feature type="helix" evidence="19">
    <location>
        <begin position="659"/>
        <end position="679"/>
    </location>
</feature>
<feature type="strand" evidence="19">
    <location>
        <begin position="687"/>
        <end position="690"/>
    </location>
</feature>
<feature type="helix" evidence="19">
    <location>
        <begin position="691"/>
        <end position="698"/>
    </location>
</feature>
<proteinExistence type="evidence at protein level"/>
<comment type="function">
    <text evidence="2 10">Calcium-regulated non-lysosomal thiol-protease which catalyzes limited proteolysis of substrates involved in cytoskeletal remodeling and signal transduction. Proteolytically cleaves MYOC at 'Arg-226' (PubMed:17650508). Proteolytically cleaves CPEB3 following neuronal stimulation which abolishes CPEB3 translational repressor activity, leading to translation of CPEB3 target mRNAs (By similarity).</text>
</comment>
<comment type="catalytic activity">
    <reaction>
        <text>Broad endopeptidase specificity.</text>
        <dbReference type="EC" id="3.4.22.53"/>
    </reaction>
</comment>
<comment type="cofactor">
    <cofactor evidence="1">
        <name>Ca(2+)</name>
        <dbReference type="ChEBI" id="CHEBI:29108"/>
    </cofactor>
    <text evidence="1">Binds 7 Ca(2+) ions.</text>
</comment>
<comment type="activity regulation">
    <text>Activated by 200-1000 micromolar concentrations of calcium and inhibited by calpastatin.</text>
</comment>
<comment type="subunit">
    <text evidence="2 3 13">Forms a heterodimer with a small (regulatory) subunit (CAPNS1). Interacts with CPEB3; this leads to cleavage of CPEB3 (By similarity). Interacts with PIDD1 alternative open reading frame protein altPIDD1 (PubMed:39532532).</text>
</comment>
<comment type="interaction">
    <interactant intactId="EBI-1028956">
        <id>P17655</id>
    </interactant>
    <interactant intactId="EBI-711828">
        <id>P04632</id>
        <label>CAPNS1</label>
    </interactant>
    <organismsDiffer>false</organismsDiffer>
    <experiments>6</experiments>
</comment>
<comment type="interaction">
    <interactant intactId="EBI-1028956">
        <id>P17655</id>
    </interactant>
    <interactant intactId="EBI-718729">
        <id>P55212</id>
        <label>CASP6</label>
    </interactant>
    <organismsDiffer>false</organismsDiffer>
    <experiments>3</experiments>
</comment>
<comment type="interaction">
    <interactant intactId="EBI-1028956">
        <id>P17655</id>
    </interactant>
    <interactant intactId="EBI-21591415">
        <id>P13473-2</id>
        <label>LAMP2</label>
    </interactant>
    <organismsDiffer>false</organismsDiffer>
    <experiments>3</experiments>
</comment>
<comment type="interaction">
    <interactant intactId="EBI-1028956">
        <id>P17655</id>
    </interactant>
    <interactant intactId="EBI-7172227">
        <id>Q9Y4K0</id>
        <label>LOXL2</label>
    </interactant>
    <organismsDiffer>false</organismsDiffer>
    <experiments>2</experiments>
</comment>
<comment type="interaction">
    <interactant intactId="EBI-1028956">
        <id>P17655</id>
    </interactant>
    <interactant intactId="EBI-3908808">
        <id>O60356</id>
        <label>NUPR1</label>
    </interactant>
    <organismsDiffer>false</organismsDiffer>
    <experiments>3</experiments>
</comment>
<comment type="interaction">
    <interactant intactId="EBI-1028956">
        <id>P17655</id>
    </interactant>
    <interactant intactId="EBI-395883">
        <id>P07237</id>
        <label>P4HB</label>
    </interactant>
    <organismsDiffer>false</organismsDiffer>
    <experiments>3</experiments>
</comment>
<comment type="interaction">
    <interactant intactId="EBI-1028956">
        <id>P17655</id>
    </interactant>
    <interactant intactId="EBI-12188331">
        <id>P60201-2</id>
        <label>PLP1</label>
    </interactant>
    <organismsDiffer>false</organismsDiffer>
    <experiments>3</experiments>
</comment>
<comment type="interaction">
    <interactant intactId="EBI-1028956">
        <id>P17655</id>
    </interactant>
    <interactant intactId="EBI-5280197">
        <id>O75400-2</id>
        <label>PRPF40A</label>
    </interactant>
    <organismsDiffer>false</organismsDiffer>
    <experiments>3</experiments>
</comment>
<comment type="interaction">
    <interactant intactId="EBI-1028956">
        <id>P17655</id>
    </interactant>
    <interactant intactId="EBI-286642">
        <id>P62826</id>
        <label>RAN</label>
    </interactant>
    <organismsDiffer>false</organismsDiffer>
    <experiments>3</experiments>
</comment>
<comment type="interaction">
    <interactant intactId="EBI-1028956">
        <id>P17655</id>
    </interactant>
    <interactant intactId="EBI-25892254">
        <id>Q9P1I4</id>
        <label>ST13</label>
    </interactant>
    <organismsDiffer>false</organismsDiffer>
    <experiments>3</experiments>
</comment>
<comment type="interaction">
    <interactant intactId="EBI-1028956">
        <id>P17655</id>
    </interactant>
    <interactant intactId="EBI-524753">
        <id>Q8IUH5</id>
        <label>ZDHHC17</label>
    </interactant>
    <organismsDiffer>false</organismsDiffer>
    <experiments>2</experiments>
</comment>
<comment type="subcellular location">
    <subcellularLocation>
        <location>Cytoplasm</location>
    </subcellularLocation>
    <subcellularLocation>
        <location>Cell membrane</location>
    </subcellularLocation>
    <text>Translocates to the plasma membrane upon Ca(2+) binding.</text>
</comment>
<comment type="alternative products">
    <event type="alternative splicing"/>
    <isoform>
        <id>P17655-1</id>
        <name>1</name>
        <sequence type="displayed"/>
    </isoform>
    <isoform>
        <id>P17655-2</id>
        <name>2</name>
        <sequence type="described" ref="VSP_043027 VSP_043028"/>
    </isoform>
</comment>
<comment type="tissue specificity">
    <text>Ubiquitous.</text>
</comment>
<comment type="similarity">
    <text evidence="16">Belongs to the peptidase C2 family.</text>
</comment>
<comment type="sequence caution" evidence="16">
    <conflict type="miscellaneous discrepancy">
        <sequence resource="EMBL-CDS" id="AAH07686"/>
    </conflict>
    <text>Contaminating sequence. Potential poly-A sequence.</text>
</comment>
<comment type="sequence caution" evidence="16">
    <conflict type="miscellaneous discrepancy">
        <sequence resource="EMBL-CDS" id="AAH11828"/>
    </conflict>
    <text>Contaminating sequence. Potential poly-A sequence.</text>
</comment>
<sequence>MAGIAAKLAKDREAAEGLGSHDRAIKYLNQDYEALRNECLEAGTLFQDPSFPAIPSALGFKELGPYSSKTRGIEWKRPTEICADPQFIIGGATRTDICQGALGDCWLLAAIASLTLNEEILARVVPLNQSFQENYAGIFHFQFWQYGEWVEVVVDDRLPTKDGELLFVHSAEGSEFWSALLEKAYAKINGCYEALSGGATTEGFEDFTGGIAEWYELKKPPPNLFKIIQKALQKGSLLGCSIDITSAADSEAITFQKLVKGHAYSVTGAEEVESNGSLQKLIRIRNPWGEVEWTGRWNDNCPSWNTIDPEERERLTRRHEDGEFWMSFSDFLRHYSRLEICNLTPDTLTSDTYKKWKLTKMDGNWRRGSTAGGCRNYPNTFWMNPQYLIKLEEEDEDEEDGESGCTFLVGLIQKHRRRQRKMGEDMHTIGFGIYEVPEELSGQTNIHLSKNFFLTNRARERSDTFINLREVLNRFKLPPGEYILVPSTFEPNKDGDFCIRVFSEKKADYQAVDDEIEANLEEFDISEDDIDDGFRRLFAQLAGEDAEISAFELQTILRRVLAKRQDIKSDGFSIETCKIMVDMLDSDGSGKLGLKEFYILWTKIQKYQKIYREIDVDRSGTMNSYEMRKALEEAGFKMPCQLHQVIVARFADDQLIIDFDNFVRCLVRLETLFKIFKQLDPENTGTIELDLISWLCFSVL</sequence>
<protein>
    <recommendedName>
        <fullName>Calpain-2 catalytic subunit</fullName>
        <ecNumber>3.4.22.53</ecNumber>
    </recommendedName>
    <alternativeName>
        <fullName>Calcium-activated neutral proteinase 2</fullName>
        <shortName>CANP 2</shortName>
    </alternativeName>
    <alternativeName>
        <fullName>Calpain M-type</fullName>
    </alternativeName>
    <alternativeName>
        <fullName>Calpain large polypeptide L2</fullName>
    </alternativeName>
    <alternativeName>
        <fullName>Calpain-2 large subunit</fullName>
    </alternativeName>
    <alternativeName>
        <fullName>Millimolar-calpain</fullName>
        <shortName>M-calpain</shortName>
    </alternativeName>
</protein>
<name>CAN2_HUMAN</name>